<accession>O94373</accession>
<gene>
    <name type="primary">atp4</name>
    <name type="ORF">SPBC1604.07</name>
</gene>
<sequence>MSSKLFCLRSFPSVQRTAWQRLVLPSTRKFSLTPTTFDKTPSGRIPPDQKAANIISSVPSTSLLTKSGVLTVTAAALATAISKGIYVVNDESIVVASFLGLVGVFGTLGRKAYNEWSDKTIAKIGGIMQAARNDHTSAIRERIDQVASLQEVESVTQALFHTSKETARMEAEIFELEQRVALAKEAKSVLDSWVHHEANVRAEQQERLVEDVLARVNSKVSTQKFQQDALNESLGEIEKVLASA</sequence>
<protein>
    <recommendedName>
        <fullName>ATP synthase subunit 4, mitochondrial</fullName>
    </recommendedName>
</protein>
<evidence type="ECO:0000250" key="1"/>
<evidence type="ECO:0000305" key="2"/>
<name>ATPF_SCHPO</name>
<feature type="transit peptide" description="Mitochondrion" evidence="1">
    <location>
        <begin position="1"/>
        <end position="36"/>
    </location>
</feature>
<feature type="chain" id="PRO_0000002523" description="ATP synthase subunit 4, mitochondrial">
    <location>
        <begin position="37"/>
        <end position="244"/>
    </location>
</feature>
<keyword id="KW-0138">CF(0)</keyword>
<keyword id="KW-0375">Hydrogen ion transport</keyword>
<keyword id="KW-0406">Ion transport</keyword>
<keyword id="KW-0472">Membrane</keyword>
<keyword id="KW-0496">Mitochondrion</keyword>
<keyword id="KW-0999">Mitochondrion inner membrane</keyword>
<keyword id="KW-1185">Reference proteome</keyword>
<keyword id="KW-0809">Transit peptide</keyword>
<keyword id="KW-0813">Transport</keyword>
<comment type="function">
    <text evidence="1">Mitochondrial membrane ATP synthase (F(1)F(0) ATP synthase or Complex V) produces ATP from ADP in the presence of a proton gradient across the membrane which is generated by electron transport complexes of the respiratory chain. F-type ATPases consist of two structural domains, F(1) - containing the extramembraneous catalytic core, and F(0) - containing the membrane proton channel, linked together by a central stalk and a peripheral stalk. During catalysis, ATP synthesis in the catalytic domain of F(1) is coupled via a rotary mechanism of the central stalk subunits to proton translocation. Part of the complex F(0) domain and the peripheric stalk, which acts as a stator to hold the catalytic alpha(3)beta(3) subcomplex and subunit a/ATP6 static relative to the rotary elements (By similarity).</text>
</comment>
<comment type="subunit">
    <text evidence="1">F-type ATPases have 2 components, CF(1) - the catalytic core - and CF(0) - the membrane proton channel. In yeast, the dimeric form of ATP synthase consists of 17 polypeptides: alpha, beta, gamma, delta, epsilon, 4 (B), 5 (OSCP), 6 (A), 8, 9 (C), d, E (Tim11), f, g, h, i/j and k (By similarity).</text>
</comment>
<comment type="subcellular location">
    <subcellularLocation>
        <location evidence="1">Mitochondrion</location>
    </subcellularLocation>
    <subcellularLocation>
        <location evidence="1">Mitochondrion inner membrane</location>
    </subcellularLocation>
</comment>
<comment type="similarity">
    <text evidence="2">Belongs to the eukaryotic ATPase B chain family.</text>
</comment>
<organism>
    <name type="scientific">Schizosaccharomyces pombe (strain 972 / ATCC 24843)</name>
    <name type="common">Fission yeast</name>
    <dbReference type="NCBI Taxonomy" id="284812"/>
    <lineage>
        <taxon>Eukaryota</taxon>
        <taxon>Fungi</taxon>
        <taxon>Dikarya</taxon>
        <taxon>Ascomycota</taxon>
        <taxon>Taphrinomycotina</taxon>
        <taxon>Schizosaccharomycetes</taxon>
        <taxon>Schizosaccharomycetales</taxon>
        <taxon>Schizosaccharomycetaceae</taxon>
        <taxon>Schizosaccharomyces</taxon>
    </lineage>
</organism>
<proteinExistence type="inferred from homology"/>
<reference key="1">
    <citation type="journal article" date="2002" name="Nature">
        <title>The genome sequence of Schizosaccharomyces pombe.</title>
        <authorList>
            <person name="Wood V."/>
            <person name="Gwilliam R."/>
            <person name="Rajandream M.A."/>
            <person name="Lyne M.H."/>
            <person name="Lyne R."/>
            <person name="Stewart A."/>
            <person name="Sgouros J.G."/>
            <person name="Peat N."/>
            <person name="Hayles J."/>
            <person name="Baker S.G."/>
            <person name="Basham D."/>
            <person name="Bowman S."/>
            <person name="Brooks K."/>
            <person name="Brown D."/>
            <person name="Brown S."/>
            <person name="Chillingworth T."/>
            <person name="Churcher C.M."/>
            <person name="Collins M."/>
            <person name="Connor R."/>
            <person name="Cronin A."/>
            <person name="Davis P."/>
            <person name="Feltwell T."/>
            <person name="Fraser A."/>
            <person name="Gentles S."/>
            <person name="Goble A."/>
            <person name="Hamlin N."/>
            <person name="Harris D.E."/>
            <person name="Hidalgo J."/>
            <person name="Hodgson G."/>
            <person name="Holroyd S."/>
            <person name="Hornsby T."/>
            <person name="Howarth S."/>
            <person name="Huckle E.J."/>
            <person name="Hunt S."/>
            <person name="Jagels K."/>
            <person name="James K.D."/>
            <person name="Jones L."/>
            <person name="Jones M."/>
            <person name="Leather S."/>
            <person name="McDonald S."/>
            <person name="McLean J."/>
            <person name="Mooney P."/>
            <person name="Moule S."/>
            <person name="Mungall K.L."/>
            <person name="Murphy L.D."/>
            <person name="Niblett D."/>
            <person name="Odell C."/>
            <person name="Oliver K."/>
            <person name="O'Neil S."/>
            <person name="Pearson D."/>
            <person name="Quail M.A."/>
            <person name="Rabbinowitsch E."/>
            <person name="Rutherford K.M."/>
            <person name="Rutter S."/>
            <person name="Saunders D."/>
            <person name="Seeger K."/>
            <person name="Sharp S."/>
            <person name="Skelton J."/>
            <person name="Simmonds M.N."/>
            <person name="Squares R."/>
            <person name="Squares S."/>
            <person name="Stevens K."/>
            <person name="Taylor K."/>
            <person name="Taylor R.G."/>
            <person name="Tivey A."/>
            <person name="Walsh S.V."/>
            <person name="Warren T."/>
            <person name="Whitehead S."/>
            <person name="Woodward J.R."/>
            <person name="Volckaert G."/>
            <person name="Aert R."/>
            <person name="Robben J."/>
            <person name="Grymonprez B."/>
            <person name="Weltjens I."/>
            <person name="Vanstreels E."/>
            <person name="Rieger M."/>
            <person name="Schaefer M."/>
            <person name="Mueller-Auer S."/>
            <person name="Gabel C."/>
            <person name="Fuchs M."/>
            <person name="Duesterhoeft A."/>
            <person name="Fritzc C."/>
            <person name="Holzer E."/>
            <person name="Moestl D."/>
            <person name="Hilbert H."/>
            <person name="Borzym K."/>
            <person name="Langer I."/>
            <person name="Beck A."/>
            <person name="Lehrach H."/>
            <person name="Reinhardt R."/>
            <person name="Pohl T.M."/>
            <person name="Eger P."/>
            <person name="Zimmermann W."/>
            <person name="Wedler H."/>
            <person name="Wambutt R."/>
            <person name="Purnelle B."/>
            <person name="Goffeau A."/>
            <person name="Cadieu E."/>
            <person name="Dreano S."/>
            <person name="Gloux S."/>
            <person name="Lelaure V."/>
            <person name="Mottier S."/>
            <person name="Galibert F."/>
            <person name="Aves S.J."/>
            <person name="Xiang Z."/>
            <person name="Hunt C."/>
            <person name="Moore K."/>
            <person name="Hurst S.M."/>
            <person name="Lucas M."/>
            <person name="Rochet M."/>
            <person name="Gaillardin C."/>
            <person name="Tallada V.A."/>
            <person name="Garzon A."/>
            <person name="Thode G."/>
            <person name="Daga R.R."/>
            <person name="Cruzado L."/>
            <person name="Jimenez J."/>
            <person name="Sanchez M."/>
            <person name="del Rey F."/>
            <person name="Benito J."/>
            <person name="Dominguez A."/>
            <person name="Revuelta J.L."/>
            <person name="Moreno S."/>
            <person name="Armstrong J."/>
            <person name="Forsburg S.L."/>
            <person name="Cerutti L."/>
            <person name="Lowe T."/>
            <person name="McCombie W.R."/>
            <person name="Paulsen I."/>
            <person name="Potashkin J."/>
            <person name="Shpakovski G.V."/>
            <person name="Ussery D."/>
            <person name="Barrell B.G."/>
            <person name="Nurse P."/>
        </authorList>
    </citation>
    <scope>NUCLEOTIDE SEQUENCE [LARGE SCALE GENOMIC DNA]</scope>
    <source>
        <strain>972 / ATCC 24843</strain>
    </source>
</reference>
<dbReference type="EMBL" id="CU329671">
    <property type="protein sequence ID" value="CAA22340.1"/>
    <property type="molecule type" value="Genomic_DNA"/>
</dbReference>
<dbReference type="PIR" id="T39507">
    <property type="entry name" value="T39507"/>
</dbReference>
<dbReference type="RefSeq" id="NP_596633.1">
    <property type="nucleotide sequence ID" value="NM_001022554.2"/>
</dbReference>
<dbReference type="SMR" id="O94373"/>
<dbReference type="BioGRID" id="276284">
    <property type="interactions" value="1"/>
</dbReference>
<dbReference type="ComplexPortal" id="CPX-25764">
    <property type="entry name" value="Mitochondrial proton translocating ATP synthase complex"/>
</dbReference>
<dbReference type="FunCoup" id="O94373">
    <property type="interactions" value="108"/>
</dbReference>
<dbReference type="STRING" id="284812.O94373"/>
<dbReference type="iPTMnet" id="O94373"/>
<dbReference type="PaxDb" id="4896-SPBC1604.07.1"/>
<dbReference type="EnsemblFungi" id="SPBC1604.07.1">
    <property type="protein sequence ID" value="SPBC1604.07.1:pep"/>
    <property type="gene ID" value="SPBC1604.07"/>
</dbReference>
<dbReference type="GeneID" id="2539732"/>
<dbReference type="KEGG" id="spo:2539732"/>
<dbReference type="PomBase" id="SPBC1604.07">
    <property type="gene designation" value="atp4"/>
</dbReference>
<dbReference type="VEuPathDB" id="FungiDB:SPBC1604.07"/>
<dbReference type="eggNOG" id="KOG3976">
    <property type="taxonomic scope" value="Eukaryota"/>
</dbReference>
<dbReference type="HOGENOM" id="CLU_077208_0_0_1"/>
<dbReference type="InParanoid" id="O94373"/>
<dbReference type="OMA" id="YTEWADG"/>
<dbReference type="PhylomeDB" id="O94373"/>
<dbReference type="PRO" id="PR:O94373"/>
<dbReference type="Proteomes" id="UP000002485">
    <property type="component" value="Chromosome II"/>
</dbReference>
<dbReference type="GO" id="GO:0099617">
    <property type="term" value="C:matrix side of mitochondrial inner membrane"/>
    <property type="evidence" value="ECO:0000305"/>
    <property type="project" value="PomBase"/>
</dbReference>
<dbReference type="GO" id="GO:0005739">
    <property type="term" value="C:mitochondrion"/>
    <property type="evidence" value="ECO:0007005"/>
    <property type="project" value="PomBase"/>
</dbReference>
<dbReference type="GO" id="GO:0045259">
    <property type="term" value="C:proton-transporting ATP synthase complex"/>
    <property type="evidence" value="ECO:0000250"/>
    <property type="project" value="PomBase"/>
</dbReference>
<dbReference type="GO" id="GO:0015078">
    <property type="term" value="F:proton transmembrane transporter activity"/>
    <property type="evidence" value="ECO:0007669"/>
    <property type="project" value="InterPro"/>
</dbReference>
<dbReference type="GO" id="GO:0015986">
    <property type="term" value="P:proton motive force-driven ATP synthesis"/>
    <property type="evidence" value="ECO:0000318"/>
    <property type="project" value="GO_Central"/>
</dbReference>
<dbReference type="GO" id="GO:0042776">
    <property type="term" value="P:proton motive force-driven mitochondrial ATP synthesis"/>
    <property type="evidence" value="ECO:0000250"/>
    <property type="project" value="PomBase"/>
</dbReference>
<dbReference type="Gene3D" id="1.20.5.2210">
    <property type="match status" value="1"/>
</dbReference>
<dbReference type="InterPro" id="IPR008688">
    <property type="entry name" value="ATP_synth_Bsub_B/MI25"/>
</dbReference>
<dbReference type="InterPro" id="IPR013837">
    <property type="entry name" value="ATP_synth_F0_suB"/>
</dbReference>
<dbReference type="PANTHER" id="PTHR12733:SF3">
    <property type="entry name" value="ATP SYNTHASE F(0) COMPLEX SUBUNIT B1, MITOCHONDRIAL"/>
    <property type="match status" value="1"/>
</dbReference>
<dbReference type="PANTHER" id="PTHR12733">
    <property type="entry name" value="MITOCHONDRIAL ATP SYNTHASE B CHAIN"/>
    <property type="match status" value="1"/>
</dbReference>
<dbReference type="Pfam" id="PF05405">
    <property type="entry name" value="Mt_ATP-synt_B"/>
    <property type="match status" value="1"/>
</dbReference>
<dbReference type="SUPFAM" id="SSF161060">
    <property type="entry name" value="ATP synthase B chain-like"/>
    <property type="match status" value="1"/>
</dbReference>